<organism>
    <name type="scientific">Bacillus subtilis (strain 168)</name>
    <dbReference type="NCBI Taxonomy" id="224308"/>
    <lineage>
        <taxon>Bacteria</taxon>
        <taxon>Bacillati</taxon>
        <taxon>Bacillota</taxon>
        <taxon>Bacilli</taxon>
        <taxon>Bacillales</taxon>
        <taxon>Bacillaceae</taxon>
        <taxon>Bacillus</taxon>
    </lineage>
</organism>
<accession>O31674</accession>
<keyword id="KW-1003">Cell membrane</keyword>
<keyword id="KW-0472">Membrane</keyword>
<keyword id="KW-1185">Reference proteome</keyword>
<keyword id="KW-0812">Transmembrane</keyword>
<keyword id="KW-1133">Transmembrane helix</keyword>
<name>YKVI_BACSU</name>
<evidence type="ECO:0000255" key="1"/>
<evidence type="ECO:0000305" key="2"/>
<feature type="chain" id="PRO_0000360716" description="Uncharacterized membrane protein YkvI">
    <location>
        <begin position="1"/>
        <end position="347"/>
    </location>
</feature>
<feature type="transmembrane region" description="Helical" evidence="1">
    <location>
        <begin position="6"/>
        <end position="26"/>
    </location>
</feature>
<feature type="transmembrane region" description="Helical" evidence="1">
    <location>
        <begin position="37"/>
        <end position="57"/>
    </location>
</feature>
<feature type="transmembrane region" description="Helical" evidence="1">
    <location>
        <begin position="90"/>
        <end position="110"/>
    </location>
</feature>
<feature type="transmembrane region" description="Helical" evidence="1">
    <location>
        <begin position="114"/>
        <end position="134"/>
    </location>
</feature>
<feature type="transmembrane region" description="Helical" evidence="1">
    <location>
        <begin position="140"/>
        <end position="160"/>
    </location>
</feature>
<feature type="transmembrane region" description="Helical" evidence="1">
    <location>
        <begin position="182"/>
        <end position="202"/>
    </location>
</feature>
<feature type="transmembrane region" description="Helical" evidence="1">
    <location>
        <begin position="217"/>
        <end position="237"/>
    </location>
</feature>
<feature type="transmembrane region" description="Helical" evidence="1">
    <location>
        <begin position="262"/>
        <end position="282"/>
    </location>
</feature>
<feature type="transmembrane region" description="Helical" evidence="1">
    <location>
        <begin position="289"/>
        <end position="309"/>
    </location>
</feature>
<feature type="transmembrane region" description="Helical" evidence="1">
    <location>
        <begin position="317"/>
        <end position="337"/>
    </location>
</feature>
<dbReference type="EMBL" id="AL009126">
    <property type="protein sequence ID" value="CAB13244.1"/>
    <property type="molecule type" value="Genomic_DNA"/>
</dbReference>
<dbReference type="PIR" id="H69867">
    <property type="entry name" value="H69867"/>
</dbReference>
<dbReference type="RefSeq" id="NP_389254.1">
    <property type="nucleotide sequence ID" value="NC_000964.3"/>
</dbReference>
<dbReference type="RefSeq" id="WP_003244712.1">
    <property type="nucleotide sequence ID" value="NZ_OZ025638.1"/>
</dbReference>
<dbReference type="SMR" id="O31674"/>
<dbReference type="FunCoup" id="O31674">
    <property type="interactions" value="6"/>
</dbReference>
<dbReference type="STRING" id="224308.BSU13710"/>
<dbReference type="TCDB" id="2.A.120.1.10">
    <property type="family name" value="the proline/amino acid permease (paap) family"/>
</dbReference>
<dbReference type="PaxDb" id="224308-BSU13710"/>
<dbReference type="EnsemblBacteria" id="CAB13244">
    <property type="protein sequence ID" value="CAB13244"/>
    <property type="gene ID" value="BSU_13710"/>
</dbReference>
<dbReference type="GeneID" id="939307"/>
<dbReference type="KEGG" id="bsu:BSU13710"/>
<dbReference type="PATRIC" id="fig|224308.179.peg.1488"/>
<dbReference type="eggNOG" id="COG3949">
    <property type="taxonomic scope" value="Bacteria"/>
</dbReference>
<dbReference type="InParanoid" id="O31674"/>
<dbReference type="OrthoDB" id="4424890at2"/>
<dbReference type="PhylomeDB" id="O31674"/>
<dbReference type="BioCyc" id="BSUB:BSU13710-MONOMER"/>
<dbReference type="Proteomes" id="UP000001570">
    <property type="component" value="Chromosome"/>
</dbReference>
<dbReference type="GO" id="GO:0005886">
    <property type="term" value="C:plasma membrane"/>
    <property type="evidence" value="ECO:0007669"/>
    <property type="project" value="UniProtKB-SubCell"/>
</dbReference>
<dbReference type="InterPro" id="IPR038728">
    <property type="entry name" value="YkvI"/>
</dbReference>
<dbReference type="PANTHER" id="PTHR37814">
    <property type="entry name" value="CONSERVED MEMBRANE PROTEIN"/>
    <property type="match status" value="1"/>
</dbReference>
<dbReference type="PANTHER" id="PTHR37814:SF1">
    <property type="entry name" value="MEMBRANE PROTEIN"/>
    <property type="match status" value="1"/>
</dbReference>
<sequence length="347" mass="37891">MEQSKGSASQLAFVYVGTVVGAGFATGREIVEFFLKFGWFGFFGILVSGGMFTLLGAKLMIISKRINAKSYQEMNIFLFGATAGRIINVFMLFVLLGVTSVMLSGAGALFEEQLGMSAQIGMLITIGLSLIVMTRGVKGIFGVNVFVVPLLIIFSMIVVADSFIFSESRNAAQWVWPHRWDWLLSAVSYGALNLSLAQAVLVPLANEMSSEKVIKKGALIGGTMLTIVLSASFLSLSTLPDVFLYDIPMAQVVYLFARSVHLIYLLIIFGEVFTSVIGNLYGLEKQVQSFLPVKSKYIFAAIMITAYITSQIGYGRLISTIYPLFGYVSLAFIGALLCKKAPRRRSL</sequence>
<protein>
    <recommendedName>
        <fullName>Uncharacterized membrane protein YkvI</fullName>
    </recommendedName>
</protein>
<reference key="1">
    <citation type="journal article" date="1997" name="Nature">
        <title>The complete genome sequence of the Gram-positive bacterium Bacillus subtilis.</title>
        <authorList>
            <person name="Kunst F."/>
            <person name="Ogasawara N."/>
            <person name="Moszer I."/>
            <person name="Albertini A.M."/>
            <person name="Alloni G."/>
            <person name="Azevedo V."/>
            <person name="Bertero M.G."/>
            <person name="Bessieres P."/>
            <person name="Bolotin A."/>
            <person name="Borchert S."/>
            <person name="Borriss R."/>
            <person name="Boursier L."/>
            <person name="Brans A."/>
            <person name="Braun M."/>
            <person name="Brignell S.C."/>
            <person name="Bron S."/>
            <person name="Brouillet S."/>
            <person name="Bruschi C.V."/>
            <person name="Caldwell B."/>
            <person name="Capuano V."/>
            <person name="Carter N.M."/>
            <person name="Choi S.-K."/>
            <person name="Codani J.-J."/>
            <person name="Connerton I.F."/>
            <person name="Cummings N.J."/>
            <person name="Daniel R.A."/>
            <person name="Denizot F."/>
            <person name="Devine K.M."/>
            <person name="Duesterhoeft A."/>
            <person name="Ehrlich S.D."/>
            <person name="Emmerson P.T."/>
            <person name="Entian K.-D."/>
            <person name="Errington J."/>
            <person name="Fabret C."/>
            <person name="Ferrari E."/>
            <person name="Foulger D."/>
            <person name="Fritz C."/>
            <person name="Fujita M."/>
            <person name="Fujita Y."/>
            <person name="Fuma S."/>
            <person name="Galizzi A."/>
            <person name="Galleron N."/>
            <person name="Ghim S.-Y."/>
            <person name="Glaser P."/>
            <person name="Goffeau A."/>
            <person name="Golightly E.J."/>
            <person name="Grandi G."/>
            <person name="Guiseppi G."/>
            <person name="Guy B.J."/>
            <person name="Haga K."/>
            <person name="Haiech J."/>
            <person name="Harwood C.R."/>
            <person name="Henaut A."/>
            <person name="Hilbert H."/>
            <person name="Holsappel S."/>
            <person name="Hosono S."/>
            <person name="Hullo M.-F."/>
            <person name="Itaya M."/>
            <person name="Jones L.-M."/>
            <person name="Joris B."/>
            <person name="Karamata D."/>
            <person name="Kasahara Y."/>
            <person name="Klaerr-Blanchard M."/>
            <person name="Klein C."/>
            <person name="Kobayashi Y."/>
            <person name="Koetter P."/>
            <person name="Koningstein G."/>
            <person name="Krogh S."/>
            <person name="Kumano M."/>
            <person name="Kurita K."/>
            <person name="Lapidus A."/>
            <person name="Lardinois S."/>
            <person name="Lauber J."/>
            <person name="Lazarevic V."/>
            <person name="Lee S.-M."/>
            <person name="Levine A."/>
            <person name="Liu H."/>
            <person name="Masuda S."/>
            <person name="Mauel C."/>
            <person name="Medigue C."/>
            <person name="Medina N."/>
            <person name="Mellado R.P."/>
            <person name="Mizuno M."/>
            <person name="Moestl D."/>
            <person name="Nakai S."/>
            <person name="Noback M."/>
            <person name="Noone D."/>
            <person name="O'Reilly M."/>
            <person name="Ogawa K."/>
            <person name="Ogiwara A."/>
            <person name="Oudega B."/>
            <person name="Park S.-H."/>
            <person name="Parro V."/>
            <person name="Pohl T.M."/>
            <person name="Portetelle D."/>
            <person name="Porwollik S."/>
            <person name="Prescott A.M."/>
            <person name="Presecan E."/>
            <person name="Pujic P."/>
            <person name="Purnelle B."/>
            <person name="Rapoport G."/>
            <person name="Rey M."/>
            <person name="Reynolds S."/>
            <person name="Rieger M."/>
            <person name="Rivolta C."/>
            <person name="Rocha E."/>
            <person name="Roche B."/>
            <person name="Rose M."/>
            <person name="Sadaie Y."/>
            <person name="Sato T."/>
            <person name="Scanlan E."/>
            <person name="Schleich S."/>
            <person name="Schroeter R."/>
            <person name="Scoffone F."/>
            <person name="Sekiguchi J."/>
            <person name="Sekowska A."/>
            <person name="Seror S.J."/>
            <person name="Serror P."/>
            <person name="Shin B.-S."/>
            <person name="Soldo B."/>
            <person name="Sorokin A."/>
            <person name="Tacconi E."/>
            <person name="Takagi T."/>
            <person name="Takahashi H."/>
            <person name="Takemaru K."/>
            <person name="Takeuchi M."/>
            <person name="Tamakoshi A."/>
            <person name="Tanaka T."/>
            <person name="Terpstra P."/>
            <person name="Tognoni A."/>
            <person name="Tosato V."/>
            <person name="Uchiyama S."/>
            <person name="Vandenbol M."/>
            <person name="Vannier F."/>
            <person name="Vassarotti A."/>
            <person name="Viari A."/>
            <person name="Wambutt R."/>
            <person name="Wedler E."/>
            <person name="Wedler H."/>
            <person name="Weitzenegger T."/>
            <person name="Winters P."/>
            <person name="Wipat A."/>
            <person name="Yamamoto H."/>
            <person name="Yamane K."/>
            <person name="Yasumoto K."/>
            <person name="Yata K."/>
            <person name="Yoshida K."/>
            <person name="Yoshikawa H.-F."/>
            <person name="Zumstein E."/>
            <person name="Yoshikawa H."/>
            <person name="Danchin A."/>
        </authorList>
    </citation>
    <scope>NUCLEOTIDE SEQUENCE [LARGE SCALE GENOMIC DNA]</scope>
    <source>
        <strain>168</strain>
    </source>
</reference>
<comment type="subcellular location">
    <subcellularLocation>
        <location evidence="2">Cell membrane</location>
        <topology evidence="2">Multi-pass membrane protein</topology>
    </subcellularLocation>
</comment>
<gene>
    <name type="primary">ykvI</name>
    <name type="ordered locus">BSU13710</name>
</gene>
<proteinExistence type="predicted"/>